<keyword id="KW-0648">Protein biosynthesis</keyword>
<keyword id="KW-0808">Transferase</keyword>
<feature type="chain" id="PRO_1000098368" description="Methionyl-tRNA formyltransferase">
    <location>
        <begin position="1"/>
        <end position="320"/>
    </location>
</feature>
<feature type="binding site" evidence="1">
    <location>
        <begin position="114"/>
        <end position="117"/>
    </location>
    <ligand>
        <name>(6S)-5,6,7,8-tetrahydrofolate</name>
        <dbReference type="ChEBI" id="CHEBI:57453"/>
    </ligand>
</feature>
<organism>
    <name type="scientific">Acinetobacter baumannii (strain SDF)</name>
    <dbReference type="NCBI Taxonomy" id="509170"/>
    <lineage>
        <taxon>Bacteria</taxon>
        <taxon>Pseudomonadati</taxon>
        <taxon>Pseudomonadota</taxon>
        <taxon>Gammaproteobacteria</taxon>
        <taxon>Moraxellales</taxon>
        <taxon>Moraxellaceae</taxon>
        <taxon>Acinetobacter</taxon>
        <taxon>Acinetobacter calcoaceticus/baumannii complex</taxon>
    </lineage>
</organism>
<name>FMT_ACIBS</name>
<evidence type="ECO:0000255" key="1">
    <source>
        <dbReference type="HAMAP-Rule" id="MF_00182"/>
    </source>
</evidence>
<protein>
    <recommendedName>
        <fullName evidence="1">Methionyl-tRNA formyltransferase</fullName>
        <ecNumber evidence="1">2.1.2.9</ecNumber>
    </recommendedName>
</protein>
<gene>
    <name evidence="1" type="primary">fmt</name>
    <name type="ordered locus">ABSDF3648</name>
</gene>
<accession>B0VQ12</accession>
<reference key="1">
    <citation type="journal article" date="2008" name="PLoS ONE">
        <title>Comparative analysis of Acinetobacters: three genomes for three lifestyles.</title>
        <authorList>
            <person name="Vallenet D."/>
            <person name="Nordmann P."/>
            <person name="Barbe V."/>
            <person name="Poirel L."/>
            <person name="Mangenot S."/>
            <person name="Bataille E."/>
            <person name="Dossat C."/>
            <person name="Gas S."/>
            <person name="Kreimeyer A."/>
            <person name="Lenoble P."/>
            <person name="Oztas S."/>
            <person name="Poulain J."/>
            <person name="Segurens B."/>
            <person name="Robert C."/>
            <person name="Abergel C."/>
            <person name="Claverie J.-M."/>
            <person name="Raoult D."/>
            <person name="Medigue C."/>
            <person name="Weissenbach J."/>
            <person name="Cruveiller S."/>
        </authorList>
    </citation>
    <scope>NUCLEOTIDE SEQUENCE [LARGE SCALE GENOMIC DNA]</scope>
    <source>
        <strain>SDF</strain>
    </source>
</reference>
<dbReference type="EC" id="2.1.2.9" evidence="1"/>
<dbReference type="EMBL" id="CU468230">
    <property type="protein sequence ID" value="CAP02903.1"/>
    <property type="molecule type" value="Genomic_DNA"/>
</dbReference>
<dbReference type="SMR" id="B0VQ12"/>
<dbReference type="KEGG" id="abm:ABSDF3648"/>
<dbReference type="HOGENOM" id="CLU_033347_1_2_6"/>
<dbReference type="Proteomes" id="UP000001741">
    <property type="component" value="Chromosome"/>
</dbReference>
<dbReference type="GO" id="GO:0005829">
    <property type="term" value="C:cytosol"/>
    <property type="evidence" value="ECO:0007669"/>
    <property type="project" value="TreeGrafter"/>
</dbReference>
<dbReference type="GO" id="GO:0004479">
    <property type="term" value="F:methionyl-tRNA formyltransferase activity"/>
    <property type="evidence" value="ECO:0007669"/>
    <property type="project" value="UniProtKB-UniRule"/>
</dbReference>
<dbReference type="CDD" id="cd08646">
    <property type="entry name" value="FMT_core_Met-tRNA-FMT_N"/>
    <property type="match status" value="1"/>
</dbReference>
<dbReference type="CDD" id="cd08704">
    <property type="entry name" value="Met_tRNA_FMT_C"/>
    <property type="match status" value="1"/>
</dbReference>
<dbReference type="Gene3D" id="3.10.25.10">
    <property type="entry name" value="Formyl transferase, C-terminal domain"/>
    <property type="match status" value="1"/>
</dbReference>
<dbReference type="Gene3D" id="3.40.50.170">
    <property type="entry name" value="Formyl transferase, N-terminal domain"/>
    <property type="match status" value="1"/>
</dbReference>
<dbReference type="HAMAP" id="MF_00182">
    <property type="entry name" value="Formyl_trans"/>
    <property type="match status" value="1"/>
</dbReference>
<dbReference type="InterPro" id="IPR005794">
    <property type="entry name" value="Fmt"/>
</dbReference>
<dbReference type="InterPro" id="IPR005793">
    <property type="entry name" value="Formyl_trans_C"/>
</dbReference>
<dbReference type="InterPro" id="IPR037022">
    <property type="entry name" value="Formyl_trans_C_sf"/>
</dbReference>
<dbReference type="InterPro" id="IPR002376">
    <property type="entry name" value="Formyl_transf_N"/>
</dbReference>
<dbReference type="InterPro" id="IPR036477">
    <property type="entry name" value="Formyl_transf_N_sf"/>
</dbReference>
<dbReference type="InterPro" id="IPR011034">
    <property type="entry name" value="Formyl_transferase-like_C_sf"/>
</dbReference>
<dbReference type="InterPro" id="IPR044135">
    <property type="entry name" value="Met-tRNA-FMT_C"/>
</dbReference>
<dbReference type="InterPro" id="IPR041711">
    <property type="entry name" value="Met-tRNA-FMT_N"/>
</dbReference>
<dbReference type="NCBIfam" id="TIGR00460">
    <property type="entry name" value="fmt"/>
    <property type="match status" value="1"/>
</dbReference>
<dbReference type="PANTHER" id="PTHR11138">
    <property type="entry name" value="METHIONYL-TRNA FORMYLTRANSFERASE"/>
    <property type="match status" value="1"/>
</dbReference>
<dbReference type="PANTHER" id="PTHR11138:SF5">
    <property type="entry name" value="METHIONYL-TRNA FORMYLTRANSFERASE, MITOCHONDRIAL"/>
    <property type="match status" value="1"/>
</dbReference>
<dbReference type="Pfam" id="PF02911">
    <property type="entry name" value="Formyl_trans_C"/>
    <property type="match status" value="1"/>
</dbReference>
<dbReference type="Pfam" id="PF00551">
    <property type="entry name" value="Formyl_trans_N"/>
    <property type="match status" value="1"/>
</dbReference>
<dbReference type="SUPFAM" id="SSF50486">
    <property type="entry name" value="FMT C-terminal domain-like"/>
    <property type="match status" value="1"/>
</dbReference>
<dbReference type="SUPFAM" id="SSF53328">
    <property type="entry name" value="Formyltransferase"/>
    <property type="match status" value="1"/>
</dbReference>
<proteinExistence type="inferred from homology"/>
<sequence>MKIIFAGTPEFAATALAALLKTSHEIIAVYTQPDRKAGRGQKLTPSPVKQLVLEYNIPVYQPLHFKASTEEGLAAQQELAALGADVMVVAAYGLILPQAVLDTPKYGCLNIHGSLLPRWRGAAPIQRAIATGDDETGITIMQMAAGLDTGDMMYKTYCPITSEDTSATLHDKLAAQGATAICAVLESEETLQKYLAEREVQDESLTVYAHKLVKSEARIDWSMNAVQVDRNIRAFNPWPVAFIQLDENNALRVWYSTISNQNKADAKAGEIIAIDKQGVHVACGENTFICLTSVQWPGGKALNAQQIAQTQKLHVGQILP</sequence>
<comment type="function">
    <text evidence="1">Attaches a formyl group to the free amino group of methionyl-tRNA(fMet). The formyl group appears to play a dual role in the initiator identity of N-formylmethionyl-tRNA by promoting its recognition by IF2 and preventing the misappropriation of this tRNA by the elongation apparatus.</text>
</comment>
<comment type="catalytic activity">
    <reaction evidence="1">
        <text>L-methionyl-tRNA(fMet) + (6R)-10-formyltetrahydrofolate = N-formyl-L-methionyl-tRNA(fMet) + (6S)-5,6,7,8-tetrahydrofolate + H(+)</text>
        <dbReference type="Rhea" id="RHEA:24380"/>
        <dbReference type="Rhea" id="RHEA-COMP:9952"/>
        <dbReference type="Rhea" id="RHEA-COMP:9953"/>
        <dbReference type="ChEBI" id="CHEBI:15378"/>
        <dbReference type="ChEBI" id="CHEBI:57453"/>
        <dbReference type="ChEBI" id="CHEBI:78530"/>
        <dbReference type="ChEBI" id="CHEBI:78844"/>
        <dbReference type="ChEBI" id="CHEBI:195366"/>
        <dbReference type="EC" id="2.1.2.9"/>
    </reaction>
</comment>
<comment type="similarity">
    <text evidence="1">Belongs to the Fmt family.</text>
</comment>